<protein>
    <recommendedName>
        <fullName evidence="1">Bifunctional enzyme IspD/IspF</fullName>
    </recommendedName>
    <domain>
        <recommendedName>
            <fullName evidence="1">2-C-methyl-D-erythritol 4-phosphate cytidylyltransferase</fullName>
            <ecNumber evidence="1">2.7.7.60</ecNumber>
        </recommendedName>
        <alternativeName>
            <fullName evidence="1">4-diphosphocytidyl-2C-methyl-D-erythritol synthase</fullName>
        </alternativeName>
        <alternativeName>
            <fullName evidence="1">MEP cytidylyltransferase</fullName>
            <shortName evidence="1">MCT</shortName>
        </alternativeName>
    </domain>
    <domain>
        <recommendedName>
            <fullName evidence="1">2-C-methyl-D-erythritol 2,4-cyclodiphosphate synthase</fullName>
            <shortName evidence="1">MECDP-synthase</shortName>
            <shortName evidence="1">MECPP-synthase</shortName>
            <shortName evidence="1">MECPS</shortName>
            <ecNumber evidence="1">4.6.1.12</ecNumber>
        </recommendedName>
    </domain>
</protein>
<feature type="chain" id="PRO_1000068624" description="Bifunctional enzyme IspD/IspF">
    <location>
        <begin position="1"/>
        <end position="374"/>
    </location>
</feature>
<feature type="region of interest" description="2-C-methyl-D-erythritol 4-phosphate cytidylyltransferase" evidence="1">
    <location>
        <begin position="1"/>
        <end position="213"/>
    </location>
</feature>
<feature type="region of interest" description="2-C-methyl-D-erythritol 2,4-cyclodiphosphate synthase" evidence="1">
    <location>
        <begin position="214"/>
        <end position="374"/>
    </location>
</feature>
<feature type="binding site" evidence="1">
    <location>
        <begin position="220"/>
        <end position="222"/>
    </location>
    <ligand>
        <name>4-CDP-2-C-methyl-D-erythritol 2-phosphate</name>
        <dbReference type="ChEBI" id="CHEBI:57919"/>
    </ligand>
</feature>
<feature type="binding site" evidence="1">
    <location>
        <position position="220"/>
    </location>
    <ligand>
        <name>a divalent metal cation</name>
        <dbReference type="ChEBI" id="CHEBI:60240"/>
    </ligand>
</feature>
<feature type="binding site" evidence="1">
    <location>
        <position position="222"/>
    </location>
    <ligand>
        <name>a divalent metal cation</name>
        <dbReference type="ChEBI" id="CHEBI:60240"/>
    </ligand>
</feature>
<feature type="binding site" evidence="1">
    <location>
        <begin position="246"/>
        <end position="247"/>
    </location>
    <ligand>
        <name>4-CDP-2-C-methyl-D-erythritol 2-phosphate</name>
        <dbReference type="ChEBI" id="CHEBI:57919"/>
    </ligand>
</feature>
<feature type="binding site" evidence="1">
    <location>
        <position position="254"/>
    </location>
    <ligand>
        <name>a divalent metal cation</name>
        <dbReference type="ChEBI" id="CHEBI:60240"/>
    </ligand>
</feature>
<feature type="binding site" evidence="1">
    <location>
        <begin position="268"/>
        <end position="270"/>
    </location>
    <ligand>
        <name>4-CDP-2-C-methyl-D-erythritol 2-phosphate</name>
        <dbReference type="ChEBI" id="CHEBI:57919"/>
    </ligand>
</feature>
<feature type="binding site" evidence="1">
    <location>
        <begin position="273"/>
        <end position="277"/>
    </location>
    <ligand>
        <name>4-CDP-2-C-methyl-D-erythritol 2-phosphate</name>
        <dbReference type="ChEBI" id="CHEBI:57919"/>
    </ligand>
</feature>
<feature type="binding site" evidence="1">
    <location>
        <begin position="344"/>
        <end position="347"/>
    </location>
    <ligand>
        <name>4-CDP-2-C-methyl-D-erythritol 2-phosphate</name>
        <dbReference type="ChEBI" id="CHEBI:57919"/>
    </ligand>
</feature>
<feature type="binding site" evidence="1">
    <location>
        <position position="351"/>
    </location>
    <ligand>
        <name>4-CDP-2-C-methyl-D-erythritol 2-phosphate</name>
        <dbReference type="ChEBI" id="CHEBI:57919"/>
    </ligand>
</feature>
<feature type="binding site" evidence="1">
    <location>
        <position position="354"/>
    </location>
    <ligand>
        <name>4-CDP-2-C-methyl-D-erythritol 2-phosphate</name>
        <dbReference type="ChEBI" id="CHEBI:57919"/>
    </ligand>
</feature>
<feature type="site" description="Transition state stabilizer" evidence="1">
    <location>
        <position position="16"/>
    </location>
</feature>
<feature type="site" description="Transition state stabilizer" evidence="1">
    <location>
        <position position="23"/>
    </location>
</feature>
<feature type="site" description="Positions MEP for the nucleophilic attack" evidence="1">
    <location>
        <position position="141"/>
    </location>
</feature>
<feature type="site" description="Positions MEP for the nucleophilic attack" evidence="1">
    <location>
        <position position="193"/>
    </location>
</feature>
<feature type="site" description="Transition state stabilizer" evidence="1">
    <location>
        <position position="246"/>
    </location>
</feature>
<feature type="site" description="Transition state stabilizer" evidence="1">
    <location>
        <position position="345"/>
    </location>
</feature>
<dbReference type="EC" id="2.7.7.60" evidence="1"/>
<dbReference type="EC" id="4.6.1.12" evidence="1"/>
<dbReference type="EMBL" id="CP000361">
    <property type="protein sequence ID" value="ABV66411.1"/>
    <property type="molecule type" value="Genomic_DNA"/>
</dbReference>
<dbReference type="RefSeq" id="WP_012012023.1">
    <property type="nucleotide sequence ID" value="NC_009850.1"/>
</dbReference>
<dbReference type="SMR" id="A8ER37"/>
<dbReference type="STRING" id="367737.Abu_0126"/>
<dbReference type="GeneID" id="24304938"/>
<dbReference type="KEGG" id="abu:Abu_0126"/>
<dbReference type="eggNOG" id="COG0245">
    <property type="taxonomic scope" value="Bacteria"/>
</dbReference>
<dbReference type="eggNOG" id="COG1211">
    <property type="taxonomic scope" value="Bacteria"/>
</dbReference>
<dbReference type="HOGENOM" id="CLU_042800_2_6_7"/>
<dbReference type="UniPathway" id="UPA00056">
    <property type="reaction ID" value="UER00093"/>
</dbReference>
<dbReference type="UniPathway" id="UPA00056">
    <property type="reaction ID" value="UER00095"/>
</dbReference>
<dbReference type="Proteomes" id="UP000001136">
    <property type="component" value="Chromosome"/>
</dbReference>
<dbReference type="GO" id="GO:0008685">
    <property type="term" value="F:2-C-methyl-D-erythritol 2,4-cyclodiphosphate synthase activity"/>
    <property type="evidence" value="ECO:0007669"/>
    <property type="project" value="UniProtKB-UniRule"/>
</dbReference>
<dbReference type="GO" id="GO:0050518">
    <property type="term" value="F:2-C-methyl-D-erythritol 4-phosphate cytidylyltransferase activity"/>
    <property type="evidence" value="ECO:0007669"/>
    <property type="project" value="UniProtKB-UniRule"/>
</dbReference>
<dbReference type="GO" id="GO:0046872">
    <property type="term" value="F:metal ion binding"/>
    <property type="evidence" value="ECO:0007669"/>
    <property type="project" value="UniProtKB-KW"/>
</dbReference>
<dbReference type="GO" id="GO:0019288">
    <property type="term" value="P:isopentenyl diphosphate biosynthetic process, methylerythritol 4-phosphate pathway"/>
    <property type="evidence" value="ECO:0007669"/>
    <property type="project" value="UniProtKB-UniRule"/>
</dbReference>
<dbReference type="GO" id="GO:0016114">
    <property type="term" value="P:terpenoid biosynthetic process"/>
    <property type="evidence" value="ECO:0007669"/>
    <property type="project" value="InterPro"/>
</dbReference>
<dbReference type="CDD" id="cd02516">
    <property type="entry name" value="CDP-ME_synthetase"/>
    <property type="match status" value="1"/>
</dbReference>
<dbReference type="CDD" id="cd00554">
    <property type="entry name" value="MECDP_synthase"/>
    <property type="match status" value="1"/>
</dbReference>
<dbReference type="Gene3D" id="3.30.1330.50">
    <property type="entry name" value="2-C-methyl-D-erythritol 2,4-cyclodiphosphate synthase"/>
    <property type="match status" value="1"/>
</dbReference>
<dbReference type="Gene3D" id="3.90.550.10">
    <property type="entry name" value="Spore Coat Polysaccharide Biosynthesis Protein SpsA, Chain A"/>
    <property type="match status" value="1"/>
</dbReference>
<dbReference type="HAMAP" id="MF_01520">
    <property type="entry name" value="IspDF"/>
    <property type="match status" value="1"/>
</dbReference>
<dbReference type="HAMAP" id="MF_00107">
    <property type="entry name" value="IspF"/>
    <property type="match status" value="1"/>
</dbReference>
<dbReference type="InterPro" id="IPR026596">
    <property type="entry name" value="IspD/F"/>
</dbReference>
<dbReference type="InterPro" id="IPR034683">
    <property type="entry name" value="IspD/TarI"/>
</dbReference>
<dbReference type="InterPro" id="IPR003526">
    <property type="entry name" value="MECDP_synthase"/>
</dbReference>
<dbReference type="InterPro" id="IPR020555">
    <property type="entry name" value="MECDP_synthase_CS"/>
</dbReference>
<dbReference type="InterPro" id="IPR036571">
    <property type="entry name" value="MECDP_synthase_sf"/>
</dbReference>
<dbReference type="InterPro" id="IPR029044">
    <property type="entry name" value="Nucleotide-diphossugar_trans"/>
</dbReference>
<dbReference type="NCBIfam" id="TIGR00151">
    <property type="entry name" value="ispF"/>
    <property type="match status" value="1"/>
</dbReference>
<dbReference type="NCBIfam" id="NF006899">
    <property type="entry name" value="PRK09382.1"/>
    <property type="match status" value="1"/>
</dbReference>
<dbReference type="PANTHER" id="PTHR43181">
    <property type="entry name" value="2-C-METHYL-D-ERYTHRITOL 2,4-CYCLODIPHOSPHATE SYNTHASE, CHLOROPLASTIC"/>
    <property type="match status" value="1"/>
</dbReference>
<dbReference type="PANTHER" id="PTHR43181:SF1">
    <property type="entry name" value="2-C-METHYL-D-ERYTHRITOL 2,4-CYCLODIPHOSPHATE SYNTHASE, CHLOROPLASTIC"/>
    <property type="match status" value="1"/>
</dbReference>
<dbReference type="Pfam" id="PF01128">
    <property type="entry name" value="IspD"/>
    <property type="match status" value="1"/>
</dbReference>
<dbReference type="Pfam" id="PF02542">
    <property type="entry name" value="YgbB"/>
    <property type="match status" value="1"/>
</dbReference>
<dbReference type="SUPFAM" id="SSF69765">
    <property type="entry name" value="IpsF-like"/>
    <property type="match status" value="1"/>
</dbReference>
<dbReference type="SUPFAM" id="SSF53448">
    <property type="entry name" value="Nucleotide-diphospho-sugar transferases"/>
    <property type="match status" value="1"/>
</dbReference>
<dbReference type="PROSITE" id="PS01350">
    <property type="entry name" value="ISPF"/>
    <property type="match status" value="1"/>
</dbReference>
<reference key="1">
    <citation type="journal article" date="2007" name="PLoS ONE">
        <title>The complete genome sequence and analysis of the Epsilonproteobacterium Arcobacter butzleri.</title>
        <authorList>
            <person name="Miller W.G."/>
            <person name="Parker C.T."/>
            <person name="Rubenfield M."/>
            <person name="Mendz G.L."/>
            <person name="Woesten M.M.S.M."/>
            <person name="Ussery D.W."/>
            <person name="Stolz J.F."/>
            <person name="Binnewies T.T."/>
            <person name="Hallin P.F."/>
            <person name="Wang G."/>
            <person name="Malek J.A."/>
            <person name="Rogosin A."/>
            <person name="Stanker L.H."/>
            <person name="Mandrell R.E."/>
        </authorList>
    </citation>
    <scope>NUCLEOTIDE SEQUENCE [LARGE SCALE GENOMIC DNA]</scope>
    <source>
        <strain>RM4018</strain>
    </source>
</reference>
<name>ISPDF_ALIB4</name>
<accession>A8ER37</accession>
<proteinExistence type="inferred from homology"/>
<sequence length="374" mass="41907">MLDVTLIVLCAGNSTRFEHKTKKQWIRVEDEPLWLNVTKRISSFAKFDKIIVTSHQDELNYMKNFSDDFTFVKGGETRQLSILNSLQFVTTKYVMITDVARACVPQSVIENLLNEKSSADCIVPILNVTDTVVYENDTIDRSNVKLIQTPQLSSTQVLRDALNTPIEFTDESSAIKAIDGKIKYIQGSTFSKKLTLGDELDELPCLKAPSNNFFTGTGFDIHAFEEIKDMYLGGVKLPYEYGFKAHSDGDVLIHSVIDALLGACGAGDIGEFFPDTDDKYKGIDSKLLLGQIVNFINNVGYEIVNVDLTIIAQKPKINPFKDEIKKSMAKLLRIEKQFVNVKATTAEKLGFIGRAEGVAVQSIATLKYYNWKKR</sequence>
<gene>
    <name evidence="1" type="primary">ispDF</name>
    <name type="ordered locus">Abu_0126</name>
</gene>
<keyword id="KW-0414">Isoprene biosynthesis</keyword>
<keyword id="KW-0456">Lyase</keyword>
<keyword id="KW-0479">Metal-binding</keyword>
<keyword id="KW-0511">Multifunctional enzyme</keyword>
<keyword id="KW-0548">Nucleotidyltransferase</keyword>
<keyword id="KW-1185">Reference proteome</keyword>
<keyword id="KW-0808">Transferase</keyword>
<evidence type="ECO:0000255" key="1">
    <source>
        <dbReference type="HAMAP-Rule" id="MF_01520"/>
    </source>
</evidence>
<organism>
    <name type="scientific">Aliarcobacter butzleri (strain RM4018)</name>
    <name type="common">Arcobacter butzleri</name>
    <dbReference type="NCBI Taxonomy" id="367737"/>
    <lineage>
        <taxon>Bacteria</taxon>
        <taxon>Pseudomonadati</taxon>
        <taxon>Campylobacterota</taxon>
        <taxon>Epsilonproteobacteria</taxon>
        <taxon>Campylobacterales</taxon>
        <taxon>Arcobacteraceae</taxon>
        <taxon>Aliarcobacter</taxon>
    </lineage>
</organism>
<comment type="function">
    <text evidence="1">Bifunctional enzyme that catalyzes the formation of 4-diphosphocytidyl-2-C-methyl-D-erythritol from CTP and 2-C-methyl-D-erythritol 4-phosphate (MEP) (IspD), and catalyzes the conversion of 4-diphosphocytidyl-2-C-methyl-D-erythritol 2-phosphate (CDP-ME2P) to 2-C-methyl-D-erythritol 2,4-cyclodiphosphate (ME-CPP) with a corresponding release of cytidine 5-monophosphate (CMP) (IspF).</text>
</comment>
<comment type="catalytic activity">
    <reaction evidence="1">
        <text>2-C-methyl-D-erythritol 4-phosphate + CTP + H(+) = 4-CDP-2-C-methyl-D-erythritol + diphosphate</text>
        <dbReference type="Rhea" id="RHEA:13429"/>
        <dbReference type="ChEBI" id="CHEBI:15378"/>
        <dbReference type="ChEBI" id="CHEBI:33019"/>
        <dbReference type="ChEBI" id="CHEBI:37563"/>
        <dbReference type="ChEBI" id="CHEBI:57823"/>
        <dbReference type="ChEBI" id="CHEBI:58262"/>
        <dbReference type="EC" id="2.7.7.60"/>
    </reaction>
</comment>
<comment type="catalytic activity">
    <reaction evidence="1">
        <text>4-CDP-2-C-methyl-D-erythritol 2-phosphate = 2-C-methyl-D-erythritol 2,4-cyclic diphosphate + CMP</text>
        <dbReference type="Rhea" id="RHEA:23864"/>
        <dbReference type="ChEBI" id="CHEBI:57919"/>
        <dbReference type="ChEBI" id="CHEBI:58483"/>
        <dbReference type="ChEBI" id="CHEBI:60377"/>
        <dbReference type="EC" id="4.6.1.12"/>
    </reaction>
</comment>
<comment type="cofactor">
    <cofactor evidence="1">
        <name>a divalent metal cation</name>
        <dbReference type="ChEBI" id="CHEBI:60240"/>
    </cofactor>
</comment>
<comment type="pathway">
    <text evidence="1">Isoprenoid biosynthesis; isopentenyl diphosphate biosynthesis via DXP pathway; isopentenyl diphosphate from 1-deoxy-D-xylulose 5-phosphate: step 2/6.</text>
</comment>
<comment type="pathway">
    <text evidence="1">Isoprenoid biosynthesis; isopentenyl diphosphate biosynthesis via DXP pathway; isopentenyl diphosphate from 1-deoxy-D-xylulose 5-phosphate: step 4/6.</text>
</comment>
<comment type="similarity">
    <text evidence="1">In the N-terminal section; belongs to the IspD/TarI cytidylyltransferase family. IspD subfamily.</text>
</comment>
<comment type="similarity">
    <text evidence="1">In the C-terminal section; belongs to the IspF family.</text>
</comment>